<comment type="function">
    <text evidence="1">Acts as an anti-CsrA protein, binds CsrA and prevents it from repressing translation of its target genes, one of which is flagellin. Binds to flagellin and participates in the assembly of the flagellum.</text>
</comment>
<comment type="subunit">
    <text evidence="1">Interacts with translational regulator CsrA and flagellin(s).</text>
</comment>
<comment type="subcellular location">
    <subcellularLocation>
        <location evidence="1">Cytoplasm</location>
    </subcellularLocation>
</comment>
<comment type="similarity">
    <text evidence="1">Belongs to the FliW family.</text>
</comment>
<feature type="chain" id="PRO_1000065817" description="Flagellar assembly factor FliW">
    <location>
        <begin position="1"/>
        <end position="173"/>
    </location>
</feature>
<feature type="region of interest" description="Disordered" evidence="2">
    <location>
        <begin position="152"/>
        <end position="173"/>
    </location>
</feature>
<evidence type="ECO:0000255" key="1">
    <source>
        <dbReference type="HAMAP-Rule" id="MF_01185"/>
    </source>
</evidence>
<evidence type="ECO:0000256" key="2">
    <source>
        <dbReference type="SAM" id="MobiDB-lite"/>
    </source>
</evidence>
<gene>
    <name evidence="1" type="primary">fliW</name>
    <name type="ordered locus">Dvul_2419</name>
</gene>
<reference key="1">
    <citation type="journal article" date="2009" name="Environ. Microbiol.">
        <title>Contribution of mobile genetic elements to Desulfovibrio vulgaris genome plasticity.</title>
        <authorList>
            <person name="Walker C.B."/>
            <person name="Stolyar S."/>
            <person name="Chivian D."/>
            <person name="Pinel N."/>
            <person name="Gabster J.A."/>
            <person name="Dehal P.S."/>
            <person name="He Z."/>
            <person name="Yang Z.K."/>
            <person name="Yen H.C."/>
            <person name="Zhou J."/>
            <person name="Wall J.D."/>
            <person name="Hazen T.C."/>
            <person name="Arkin A.P."/>
            <person name="Stahl D.A."/>
        </authorList>
    </citation>
    <scope>NUCLEOTIDE SEQUENCE [LARGE SCALE GENOMIC DNA]</scope>
    <source>
        <strain>DP4</strain>
    </source>
</reference>
<keyword id="KW-1005">Bacterial flagellum biogenesis</keyword>
<keyword id="KW-0143">Chaperone</keyword>
<keyword id="KW-0963">Cytoplasm</keyword>
<keyword id="KW-0810">Translation regulation</keyword>
<protein>
    <recommendedName>
        <fullName evidence="1">Flagellar assembly factor FliW</fullName>
    </recommendedName>
</protein>
<organism>
    <name type="scientific">Nitratidesulfovibrio vulgaris (strain DP4)</name>
    <name type="common">Desulfovibrio vulgaris</name>
    <dbReference type="NCBI Taxonomy" id="391774"/>
    <lineage>
        <taxon>Bacteria</taxon>
        <taxon>Pseudomonadati</taxon>
        <taxon>Thermodesulfobacteriota</taxon>
        <taxon>Desulfovibrionia</taxon>
        <taxon>Desulfovibrionales</taxon>
        <taxon>Desulfovibrionaceae</taxon>
        <taxon>Nitratidesulfovibrio</taxon>
    </lineage>
</organism>
<sequence length="173" mass="19166">MARQNEIEIQTRIGRQRITLDKIIHFPRGLAGFEGRHDFTLLQLREGAPFLVLQSLDDPGLGLLVADPYSFLTDYQIRVGDPEQRLLKLENIRQVAVLVTVSIPAGQPEKTALNLTGPILINHRARIGLQVPQTDASLPPQFYLHMDDANGSTTVRRKASPPAAGEDKGDVQE</sequence>
<name>FLIW_NITV4</name>
<dbReference type="EMBL" id="CP000527">
    <property type="protein sequence ID" value="ABM29435.1"/>
    <property type="molecule type" value="Genomic_DNA"/>
</dbReference>
<dbReference type="RefSeq" id="WP_010937828.1">
    <property type="nucleotide sequence ID" value="NC_008751.1"/>
</dbReference>
<dbReference type="SMR" id="A1VG69"/>
<dbReference type="KEGG" id="dvl:Dvul_2419"/>
<dbReference type="HOGENOM" id="CLU_112356_0_2_7"/>
<dbReference type="Proteomes" id="UP000009173">
    <property type="component" value="Chromosome"/>
</dbReference>
<dbReference type="GO" id="GO:0005737">
    <property type="term" value="C:cytoplasm"/>
    <property type="evidence" value="ECO:0007669"/>
    <property type="project" value="UniProtKB-SubCell"/>
</dbReference>
<dbReference type="GO" id="GO:0044780">
    <property type="term" value="P:bacterial-type flagellum assembly"/>
    <property type="evidence" value="ECO:0007669"/>
    <property type="project" value="UniProtKB-UniRule"/>
</dbReference>
<dbReference type="GO" id="GO:0006417">
    <property type="term" value="P:regulation of translation"/>
    <property type="evidence" value="ECO:0007669"/>
    <property type="project" value="UniProtKB-KW"/>
</dbReference>
<dbReference type="Gene3D" id="2.30.290.10">
    <property type="entry name" value="BH3618-like"/>
    <property type="match status" value="1"/>
</dbReference>
<dbReference type="HAMAP" id="MF_01185">
    <property type="entry name" value="FliW"/>
    <property type="match status" value="1"/>
</dbReference>
<dbReference type="InterPro" id="IPR003775">
    <property type="entry name" value="Flagellar_assembly_factor_FliW"/>
</dbReference>
<dbReference type="InterPro" id="IPR024046">
    <property type="entry name" value="Flagellar_assmbl_FliW_dom_sf"/>
</dbReference>
<dbReference type="NCBIfam" id="NF009793">
    <property type="entry name" value="PRK13285.1-1"/>
    <property type="match status" value="1"/>
</dbReference>
<dbReference type="PANTHER" id="PTHR39190">
    <property type="entry name" value="FLAGELLAR ASSEMBLY FACTOR FLIW"/>
    <property type="match status" value="1"/>
</dbReference>
<dbReference type="PANTHER" id="PTHR39190:SF1">
    <property type="entry name" value="FLAGELLAR ASSEMBLY FACTOR FLIW"/>
    <property type="match status" value="1"/>
</dbReference>
<dbReference type="Pfam" id="PF02623">
    <property type="entry name" value="FliW"/>
    <property type="match status" value="1"/>
</dbReference>
<dbReference type="SUPFAM" id="SSF141457">
    <property type="entry name" value="BH3618-like"/>
    <property type="match status" value="1"/>
</dbReference>
<accession>A1VG69</accession>
<proteinExistence type="inferred from homology"/>